<keyword id="KW-0521">NADP</keyword>
<keyword id="KW-0560">Oxidoreductase</keyword>
<keyword id="KW-1185">Reference proteome</keyword>
<comment type="interaction">
    <interactant intactId="EBI-1994">
        <id>P42884</id>
    </interactant>
    <interactant intactId="EBI-18140">
        <id>P40073</id>
        <label>SHO1</label>
    </interactant>
    <organismsDiffer>false</organismsDiffer>
    <experiments>2</experiments>
</comment>
<comment type="similarity">
    <text evidence="2">Belongs to the aldo/keto reductase family. Aldo/keto reductase 2 subfamily.</text>
</comment>
<protein>
    <recommendedName>
        <fullName>Putative aryl-alcohol dehydrogenase AAD14</fullName>
        <ecNumber>1.1.1.-</ecNumber>
    </recommendedName>
</protein>
<accession>P42884</accession>
<accession>D6W0L6</accession>
<feature type="chain" id="PRO_0000070369" description="Putative aryl-alcohol dehydrogenase AAD14">
    <location>
        <begin position="1"/>
        <end position="376"/>
    </location>
</feature>
<feature type="active site" description="Proton donor" evidence="1">
    <location>
        <position position="76"/>
    </location>
</feature>
<feature type="binding site" evidence="1">
    <location>
        <position position="151"/>
    </location>
    <ligand>
        <name>substrate</name>
    </ligand>
</feature>
<feature type="binding site" evidence="1">
    <location>
        <begin position="236"/>
        <end position="246"/>
    </location>
    <ligand>
        <name>NADP(+)</name>
        <dbReference type="ChEBI" id="CHEBI:58349"/>
    </ligand>
</feature>
<feature type="site" description="Lowers pKa of active site Tyr" evidence="1">
    <location>
        <position position="103"/>
    </location>
</feature>
<proteinExistence type="evidence at protein level"/>
<name>AAD14_YEAST</name>
<organism>
    <name type="scientific">Saccharomyces cerevisiae (strain ATCC 204508 / S288c)</name>
    <name type="common">Baker's yeast</name>
    <dbReference type="NCBI Taxonomy" id="559292"/>
    <lineage>
        <taxon>Eukaryota</taxon>
        <taxon>Fungi</taxon>
        <taxon>Dikarya</taxon>
        <taxon>Ascomycota</taxon>
        <taxon>Saccharomycotina</taxon>
        <taxon>Saccharomycetes</taxon>
        <taxon>Saccharomycetales</taxon>
        <taxon>Saccharomycetaceae</taxon>
        <taxon>Saccharomyces</taxon>
    </lineage>
</organism>
<dbReference type="EC" id="1.1.1.-"/>
<dbReference type="EMBL" id="X83226">
    <property type="protein sequence ID" value="CAA58227.1"/>
    <property type="molecule type" value="Genomic_DNA"/>
</dbReference>
<dbReference type="EMBL" id="Z71607">
    <property type="protein sequence ID" value="CAA96264.1"/>
    <property type="molecule type" value="Genomic_DNA"/>
</dbReference>
<dbReference type="EMBL" id="BK006947">
    <property type="protein sequence ID" value="DAA10232.1"/>
    <property type="molecule type" value="Genomic_DNA"/>
</dbReference>
<dbReference type="PIR" id="S51335">
    <property type="entry name" value="S51335"/>
</dbReference>
<dbReference type="RefSeq" id="NP_014068.1">
    <property type="nucleotide sequence ID" value="NM_001183169.1"/>
</dbReference>
<dbReference type="SMR" id="P42884"/>
<dbReference type="BioGRID" id="35510">
    <property type="interactions" value="43"/>
</dbReference>
<dbReference type="DIP" id="DIP-2146N"/>
<dbReference type="FunCoup" id="P42884">
    <property type="interactions" value="77"/>
</dbReference>
<dbReference type="IntAct" id="P42884">
    <property type="interactions" value="3"/>
</dbReference>
<dbReference type="MINT" id="P42884"/>
<dbReference type="STRING" id="4932.YNL331C"/>
<dbReference type="iPTMnet" id="P42884"/>
<dbReference type="PaxDb" id="4932-YNL331C"/>
<dbReference type="PeptideAtlas" id="P42884"/>
<dbReference type="EnsemblFungi" id="YNL331C_mRNA">
    <property type="protein sequence ID" value="YNL331C"/>
    <property type="gene ID" value="YNL331C"/>
</dbReference>
<dbReference type="GeneID" id="855385"/>
<dbReference type="KEGG" id="sce:YNL331C"/>
<dbReference type="AGR" id="SGD:S000005275"/>
<dbReference type="SGD" id="S000005275">
    <property type="gene designation" value="AAD14"/>
</dbReference>
<dbReference type="VEuPathDB" id="FungiDB:YNL331C"/>
<dbReference type="eggNOG" id="KOG1575">
    <property type="taxonomic scope" value="Eukaryota"/>
</dbReference>
<dbReference type="GeneTree" id="ENSGT00940000176306"/>
<dbReference type="HOGENOM" id="CLU_023205_2_2_1"/>
<dbReference type="InParanoid" id="P42884"/>
<dbReference type="OMA" id="GWTEPPI"/>
<dbReference type="OrthoDB" id="48988at2759"/>
<dbReference type="BioCyc" id="YEAST:YNL331C-MONOMER"/>
<dbReference type="BioGRID-ORCS" id="855385">
    <property type="hits" value="0 hits in 10 CRISPR screens"/>
</dbReference>
<dbReference type="PRO" id="PR:P42884"/>
<dbReference type="Proteomes" id="UP000002311">
    <property type="component" value="Chromosome XIV"/>
</dbReference>
<dbReference type="RNAct" id="P42884">
    <property type="molecule type" value="protein"/>
</dbReference>
<dbReference type="GO" id="GO:0047681">
    <property type="term" value="F:aryl-alcohol dehydrogenase (NADP+) activity"/>
    <property type="evidence" value="ECO:0000314"/>
    <property type="project" value="SGD"/>
</dbReference>
<dbReference type="GO" id="GO:0006081">
    <property type="term" value="P:aldehyde metabolic process"/>
    <property type="evidence" value="ECO:0000250"/>
    <property type="project" value="SGD"/>
</dbReference>
<dbReference type="CDD" id="cd19147">
    <property type="entry name" value="AKR_AKR9A3_9B1-4"/>
    <property type="match status" value="1"/>
</dbReference>
<dbReference type="FunFam" id="3.20.20.100:FF:000024">
    <property type="entry name" value="Aryl-alcohol dehydrogenase"/>
    <property type="match status" value="1"/>
</dbReference>
<dbReference type="Gene3D" id="3.20.20.100">
    <property type="entry name" value="NADP-dependent oxidoreductase domain"/>
    <property type="match status" value="1"/>
</dbReference>
<dbReference type="InterPro" id="IPR050523">
    <property type="entry name" value="AKR_Detox_Biosynth"/>
</dbReference>
<dbReference type="InterPro" id="IPR023210">
    <property type="entry name" value="NADP_OxRdtase_dom"/>
</dbReference>
<dbReference type="InterPro" id="IPR036812">
    <property type="entry name" value="NADP_OxRdtase_dom_sf"/>
</dbReference>
<dbReference type="PANTHER" id="PTHR43364:SF2">
    <property type="entry name" value="ARYL-ALCOHOL DEHYDROGENASE AAD10-RELATED"/>
    <property type="match status" value="1"/>
</dbReference>
<dbReference type="PANTHER" id="PTHR43364">
    <property type="entry name" value="NADH-SPECIFIC METHYLGLYOXAL REDUCTASE-RELATED"/>
    <property type="match status" value="1"/>
</dbReference>
<dbReference type="Pfam" id="PF00248">
    <property type="entry name" value="Aldo_ket_red"/>
    <property type="match status" value="1"/>
</dbReference>
<dbReference type="SUPFAM" id="SSF51430">
    <property type="entry name" value="NAD(P)-linked oxidoreductase"/>
    <property type="match status" value="1"/>
</dbReference>
<sequence length="376" mass="41991">MTDLFKPLPEPPTELGRLRVLSKTAGIRVSPLILGGASIGDAWSGFMGSMNKEQAFELLDAFYEAGGNCIDTANSYQNEESEIWIGEWMASRKLRDQIVIATKFTGDYKKYEVGGGKSANYCGNHKRSLHVSVRDSLRKLQTDWIDILYIHWWDYMSSIEEVMDSLHILVQQGKVLYLGVSDTPAWVVSAANYYATSHGKTPFSVYQGKWNVLNRDFERDIIPMARHFGMALAPWDVMGGGRFQSKKAMEERKKNGEGLRTFVGGPEQTELEVKISEALTKIAEEHGTESVTAIAIAYVRSKAKNVFPLIGGRKIEHLKQNIEALSIKLTPEQIEYLESIVPFDVGFPKSLIGDDPAVTKKLSPLTSMSARIAFDN</sequence>
<evidence type="ECO:0000250" key="1"/>
<evidence type="ECO:0000305" key="2"/>
<gene>
    <name type="primary">AAD14</name>
    <name type="ordered locus">YNL331C</name>
    <name type="ORF">N0300</name>
</gene>
<reference key="1">
    <citation type="journal article" date="1995" name="Yeast">
        <title>An 8.2 kb DNA segment from chromosome XIV carries the RPD3 and PAS8 genes as well as the Saccharomyces cerevisiae homologue of the thiamine-repressed nmt1 gene and a chromosome III-duplicated gene for a putative aryl-alcohol dehydrogenase.</title>
        <authorList>
            <person name="van Dyck L."/>
            <person name="Pascual-Ahuir A."/>
            <person name="Purnelle B."/>
            <person name="Goffeau A."/>
        </authorList>
    </citation>
    <scope>NUCLEOTIDE SEQUENCE [GENOMIC DNA]</scope>
    <source>
        <strain>ATCC 96604 / S288c / FY1679</strain>
    </source>
</reference>
<reference key="2">
    <citation type="journal article" date="1997" name="Nature">
        <title>The nucleotide sequence of Saccharomyces cerevisiae chromosome XIV and its evolutionary implications.</title>
        <authorList>
            <person name="Philippsen P."/>
            <person name="Kleine K."/>
            <person name="Poehlmann R."/>
            <person name="Duesterhoeft A."/>
            <person name="Hamberg K."/>
            <person name="Hegemann J.H."/>
            <person name="Obermaier B."/>
            <person name="Urrestarazu L.A."/>
            <person name="Aert R."/>
            <person name="Albermann K."/>
            <person name="Altmann R."/>
            <person name="Andre B."/>
            <person name="Baladron V."/>
            <person name="Ballesta J.P.G."/>
            <person name="Becam A.-M."/>
            <person name="Beinhauer J.D."/>
            <person name="Boskovic J."/>
            <person name="Buitrago M.J."/>
            <person name="Bussereau F."/>
            <person name="Coster F."/>
            <person name="Crouzet M."/>
            <person name="D'Angelo M."/>
            <person name="Dal Pero F."/>
            <person name="De Antoni A."/>
            <person name="del Rey F."/>
            <person name="Doignon F."/>
            <person name="Domdey H."/>
            <person name="Dubois E."/>
            <person name="Fiedler T.A."/>
            <person name="Fleig U."/>
            <person name="Floeth M."/>
            <person name="Fritz C."/>
            <person name="Gaillardin C."/>
            <person name="Garcia-Cantalejo J.M."/>
            <person name="Glansdorff N."/>
            <person name="Goffeau A."/>
            <person name="Gueldener U."/>
            <person name="Herbert C.J."/>
            <person name="Heumann K."/>
            <person name="Heuss-Neitzel D."/>
            <person name="Hilbert H."/>
            <person name="Hinni K."/>
            <person name="Iraqui Houssaini I."/>
            <person name="Jacquet M."/>
            <person name="Jimenez A."/>
            <person name="Jonniaux J.-L."/>
            <person name="Karpfinger-Hartl L."/>
            <person name="Lanfranchi G."/>
            <person name="Lepingle A."/>
            <person name="Levesque H."/>
            <person name="Lyck R."/>
            <person name="Maftahi M."/>
            <person name="Mallet L."/>
            <person name="Maurer C.T.C."/>
            <person name="Messenguy F."/>
            <person name="Mewes H.-W."/>
            <person name="Moestl D."/>
            <person name="Nasr F."/>
            <person name="Nicaud J.-M."/>
            <person name="Niedenthal R.K."/>
            <person name="Pandolfo D."/>
            <person name="Pierard A."/>
            <person name="Piravandi E."/>
            <person name="Planta R.J."/>
            <person name="Pohl T.M."/>
            <person name="Purnelle B."/>
            <person name="Rebischung C."/>
            <person name="Remacha M.A."/>
            <person name="Revuelta J.L."/>
            <person name="Rinke M."/>
            <person name="Saiz J.E."/>
            <person name="Sartorello F."/>
            <person name="Scherens B."/>
            <person name="Sen-Gupta M."/>
            <person name="Soler-Mira A."/>
            <person name="Urbanus J.H.M."/>
            <person name="Valle G."/>
            <person name="Van Dyck L."/>
            <person name="Verhasselt P."/>
            <person name="Vierendeels F."/>
            <person name="Vissers S."/>
            <person name="Voet M."/>
            <person name="Volckaert G."/>
            <person name="Wach A."/>
            <person name="Wambutt R."/>
            <person name="Wedler H."/>
            <person name="Zollner A."/>
            <person name="Hani J."/>
        </authorList>
    </citation>
    <scope>NUCLEOTIDE SEQUENCE [LARGE SCALE GENOMIC DNA]</scope>
    <source>
        <strain>ATCC 204508 / S288c</strain>
    </source>
</reference>
<reference key="3">
    <citation type="journal article" date="2014" name="G3 (Bethesda)">
        <title>The reference genome sequence of Saccharomyces cerevisiae: Then and now.</title>
        <authorList>
            <person name="Engel S.R."/>
            <person name="Dietrich F.S."/>
            <person name="Fisk D.G."/>
            <person name="Binkley G."/>
            <person name="Balakrishnan R."/>
            <person name="Costanzo M.C."/>
            <person name="Dwight S.S."/>
            <person name="Hitz B.C."/>
            <person name="Karra K."/>
            <person name="Nash R.S."/>
            <person name="Weng S."/>
            <person name="Wong E.D."/>
            <person name="Lloyd P."/>
            <person name="Skrzypek M.S."/>
            <person name="Miyasato S.R."/>
            <person name="Simison M."/>
            <person name="Cherry J.M."/>
        </authorList>
    </citation>
    <scope>GENOME REANNOTATION</scope>
    <source>
        <strain>ATCC 204508 / S288c</strain>
    </source>
</reference>